<evidence type="ECO:0000250" key="1"/>
<evidence type="ECO:0000250" key="2">
    <source>
        <dbReference type="UniProtKB" id="Q7TSZ8"/>
    </source>
</evidence>
<evidence type="ECO:0000250" key="3">
    <source>
        <dbReference type="UniProtKB" id="Q96RE7"/>
    </source>
</evidence>
<evidence type="ECO:0000255" key="4">
    <source>
        <dbReference type="PROSITE-ProRule" id="PRU00037"/>
    </source>
</evidence>
<evidence type="ECO:0000255" key="5">
    <source>
        <dbReference type="PROSITE-ProRule" id="PRU00784"/>
    </source>
</evidence>
<evidence type="ECO:0000256" key="6">
    <source>
        <dbReference type="SAM" id="MobiDB-lite"/>
    </source>
</evidence>
<evidence type="ECO:0000269" key="7">
    <source>
    </source>
</evidence>
<evidence type="ECO:0000269" key="8">
    <source>
    </source>
</evidence>
<evidence type="ECO:0000269" key="9">
    <source>
    </source>
</evidence>
<evidence type="ECO:0000269" key="10">
    <source>
    </source>
</evidence>
<evidence type="ECO:0000269" key="11">
    <source>
    </source>
</evidence>
<evidence type="ECO:0000269" key="12">
    <source>
    </source>
</evidence>
<evidence type="ECO:0000305" key="13"/>
<feature type="chain" id="PRO_0000274043" description="Nucleus accumbens-associated protein 1">
    <location>
        <begin position="1"/>
        <end position="514"/>
    </location>
</feature>
<feature type="domain" description="BTB" evidence="4">
    <location>
        <begin position="30"/>
        <end position="94"/>
    </location>
</feature>
<feature type="domain" description="BEN" evidence="5">
    <location>
        <begin position="360"/>
        <end position="457"/>
    </location>
</feature>
<feature type="region of interest" description="Disordered" evidence="6">
    <location>
        <begin position="183"/>
        <end position="218"/>
    </location>
</feature>
<feature type="region of interest" description="Disordered" evidence="6">
    <location>
        <begin position="241"/>
        <end position="279"/>
    </location>
</feature>
<feature type="compositionally biased region" description="Polar residues" evidence="6">
    <location>
        <begin position="242"/>
        <end position="251"/>
    </location>
</feature>
<feature type="compositionally biased region" description="Low complexity" evidence="6">
    <location>
        <begin position="252"/>
        <end position="264"/>
    </location>
</feature>
<feature type="compositionally biased region" description="Acidic residues" evidence="6">
    <location>
        <begin position="267"/>
        <end position="279"/>
    </location>
</feature>
<feature type="modified residue" description="Phosphoserine" evidence="3">
    <location>
        <position position="187"/>
    </location>
</feature>
<feature type="modified residue" description="Phosphoserine; by PKC" evidence="9">
    <location>
        <position position="245"/>
    </location>
</feature>
<feature type="modified residue" description="Phosphoserine" evidence="2">
    <location>
        <position position="492"/>
    </location>
</feature>
<feature type="modified residue" description="Phosphoserine" evidence="2">
    <location>
        <position position="496"/>
    </location>
</feature>
<feature type="cross-link" description="Glycyl lysine isopeptide (Lys-Gly) (interchain with G-Cter in SUMO1); alternate" evidence="3">
    <location>
        <position position="167"/>
    </location>
</feature>
<feature type="cross-link" description="Glycyl lysine isopeptide (Lys-Gly) (interchain with G-Cter in SUMO2); alternate" evidence="3">
    <location>
        <position position="167"/>
    </location>
</feature>
<feature type="cross-link" description="Glycyl lysine isopeptide (Lys-Gly) (interchain with G-Cter in SUMO2)" evidence="3">
    <location>
        <position position="182"/>
    </location>
</feature>
<feature type="cross-link" description="Glycyl lysine isopeptide (Lys-Gly) (interchain with G-Cter in SUMO2)" evidence="3">
    <location>
        <position position="304"/>
    </location>
</feature>
<feature type="cross-link" description="Glycyl lysine isopeptide (Lys-Gly) (interchain with G-Cter in SUMO2)" evidence="3">
    <location>
        <position position="438"/>
    </location>
</feature>
<feature type="cross-link" description="Glycyl lysine isopeptide (Lys-Gly) (interchain with G-Cter in SUMO2)" evidence="3">
    <location>
        <position position="466"/>
    </location>
</feature>
<feature type="cross-link" description="Glycyl lysine isopeptide (Lys-Gly) (interchain with G-Cter in SUMO2)" evidence="3">
    <location>
        <position position="485"/>
    </location>
</feature>
<feature type="splice variant" id="VSP_022613" description="In isoform 2." evidence="13">
    <location>
        <begin position="275"/>
        <end position="301"/>
    </location>
</feature>
<feature type="mutagenesis site" description="Abrogates transcriptional repression." evidence="10">
    <original>Q</original>
    <variation>L</variation>
    <location>
        <position position="23"/>
    </location>
</feature>
<gene>
    <name type="primary">Nacc1</name>
    <name type="synonym">Btbd14b</name>
    <name type="synonym">Nac1</name>
</gene>
<protein>
    <recommendedName>
        <fullName>Nucleus accumbens-associated protein 1</fullName>
        <shortName>NAC-1</shortName>
    </recommendedName>
    <alternativeName>
        <fullName>BTB/POZ domain-containing protein 14B</fullName>
    </alternativeName>
</protein>
<accession>O35260</accession>
<name>NACC1_RAT</name>
<dbReference type="EMBL" id="AF015911">
    <property type="protein sequence ID" value="AAB69864.1"/>
    <property type="molecule type" value="mRNA"/>
</dbReference>
<dbReference type="RefSeq" id="NP_599240.1">
    <molecule id="O35260-1"/>
    <property type="nucleotide sequence ID" value="NM_134413.2"/>
</dbReference>
<dbReference type="RefSeq" id="XP_008770568.1">
    <molecule id="O35260-1"/>
    <property type="nucleotide sequence ID" value="XM_008772346.4"/>
</dbReference>
<dbReference type="RefSeq" id="XP_063133823.1">
    <molecule id="O35260-2"/>
    <property type="nucleotide sequence ID" value="XM_063277753.1"/>
</dbReference>
<dbReference type="SMR" id="O35260"/>
<dbReference type="BioGRID" id="251261">
    <property type="interactions" value="1"/>
</dbReference>
<dbReference type="FunCoup" id="O35260">
    <property type="interactions" value="2050"/>
</dbReference>
<dbReference type="STRING" id="10116.ENSRNOP00000071927"/>
<dbReference type="iPTMnet" id="O35260"/>
<dbReference type="PhosphoSitePlus" id="O35260"/>
<dbReference type="jPOST" id="O35260"/>
<dbReference type="PaxDb" id="10116-ENSRNOP00000003884"/>
<dbReference type="Ensembl" id="ENSRNOT00000091670.2">
    <molecule id="O35260-2"/>
    <property type="protein sequence ID" value="ENSRNOP00000071927.2"/>
    <property type="gene ID" value="ENSRNOG00000002864.6"/>
</dbReference>
<dbReference type="GeneID" id="171454"/>
<dbReference type="KEGG" id="rno:171454"/>
<dbReference type="AGR" id="RGD:621003"/>
<dbReference type="CTD" id="112939"/>
<dbReference type="RGD" id="621003">
    <property type="gene designation" value="Nacc1"/>
</dbReference>
<dbReference type="VEuPathDB" id="HostDB:ENSRNOG00000002864"/>
<dbReference type="eggNOG" id="KOG1721">
    <property type="taxonomic scope" value="Eukaryota"/>
</dbReference>
<dbReference type="GeneTree" id="ENSGT00940000159327"/>
<dbReference type="InParanoid" id="O35260"/>
<dbReference type="OMA" id="DMMSMEH"/>
<dbReference type="PhylomeDB" id="O35260"/>
<dbReference type="PRO" id="PR:O35260"/>
<dbReference type="Proteomes" id="UP000002494">
    <property type="component" value="Chromosome 19"/>
</dbReference>
<dbReference type="Bgee" id="ENSRNOG00000002864">
    <property type="expression patterns" value="Expressed in frontal cortex and 19 other cell types or tissues"/>
</dbReference>
<dbReference type="GO" id="GO:0030054">
    <property type="term" value="C:cell junction"/>
    <property type="evidence" value="ECO:0007669"/>
    <property type="project" value="Ensembl"/>
</dbReference>
<dbReference type="GO" id="GO:0005737">
    <property type="term" value="C:cytoplasm"/>
    <property type="evidence" value="ECO:0007669"/>
    <property type="project" value="UniProtKB-SubCell"/>
</dbReference>
<dbReference type="GO" id="GO:0005654">
    <property type="term" value="C:nucleoplasm"/>
    <property type="evidence" value="ECO:0007669"/>
    <property type="project" value="Ensembl"/>
</dbReference>
<dbReference type="GO" id="GO:0005634">
    <property type="term" value="C:nucleus"/>
    <property type="evidence" value="ECO:0000250"/>
    <property type="project" value="UniProtKB"/>
</dbReference>
<dbReference type="GO" id="GO:0000981">
    <property type="term" value="F:DNA-binding transcription factor activity, RNA polymerase II-specific"/>
    <property type="evidence" value="ECO:0000318"/>
    <property type="project" value="GO_Central"/>
</dbReference>
<dbReference type="GO" id="GO:0000978">
    <property type="term" value="F:RNA polymerase II cis-regulatory region sequence-specific DNA binding"/>
    <property type="evidence" value="ECO:0000318"/>
    <property type="project" value="GO_Central"/>
</dbReference>
<dbReference type="GO" id="GO:0045892">
    <property type="term" value="P:negative regulation of DNA-templated transcription"/>
    <property type="evidence" value="ECO:0000250"/>
    <property type="project" value="UniProtKB"/>
</dbReference>
<dbReference type="GO" id="GO:0008284">
    <property type="term" value="P:positive regulation of cell population proliferation"/>
    <property type="evidence" value="ECO:0000266"/>
    <property type="project" value="RGD"/>
</dbReference>
<dbReference type="GO" id="GO:0006357">
    <property type="term" value="P:regulation of transcription by RNA polymerase II"/>
    <property type="evidence" value="ECO:0000318"/>
    <property type="project" value="GO_Central"/>
</dbReference>
<dbReference type="CDD" id="cd18290">
    <property type="entry name" value="BTB_POZ_BTBD14B_NAC1"/>
    <property type="match status" value="1"/>
</dbReference>
<dbReference type="FunFam" id="1.10.10.2590:FF:000002">
    <property type="entry name" value="Putative nucleus accumbens-associated protein 2"/>
    <property type="match status" value="1"/>
</dbReference>
<dbReference type="FunFam" id="3.30.710.10:FF:000009">
    <property type="entry name" value="Zinc finger and BTB domain-containing 37"/>
    <property type="match status" value="1"/>
</dbReference>
<dbReference type="Gene3D" id="1.10.10.2590">
    <property type="entry name" value="BEN domain"/>
    <property type="match status" value="1"/>
</dbReference>
<dbReference type="Gene3D" id="3.30.710.10">
    <property type="entry name" value="Potassium Channel Kv1.1, Chain A"/>
    <property type="match status" value="1"/>
</dbReference>
<dbReference type="InterPro" id="IPR018379">
    <property type="entry name" value="BEN_domain"/>
</dbReference>
<dbReference type="InterPro" id="IPR000210">
    <property type="entry name" value="BTB/POZ_dom"/>
</dbReference>
<dbReference type="InterPro" id="IPR011333">
    <property type="entry name" value="SKP1/BTB/POZ_sf"/>
</dbReference>
<dbReference type="InterPro" id="IPR050457">
    <property type="entry name" value="ZnFinger_BTB_dom_contain"/>
</dbReference>
<dbReference type="PANTHER" id="PTHR46105">
    <property type="entry name" value="AGAP004733-PA"/>
    <property type="match status" value="1"/>
</dbReference>
<dbReference type="PANTHER" id="PTHR46105:SF3">
    <property type="entry name" value="NUCLEUS ACCUMBENS-ASSOCIATED PROTEIN 1"/>
    <property type="match status" value="1"/>
</dbReference>
<dbReference type="Pfam" id="PF10523">
    <property type="entry name" value="BEN"/>
    <property type="match status" value="1"/>
</dbReference>
<dbReference type="Pfam" id="PF00651">
    <property type="entry name" value="BTB"/>
    <property type="match status" value="1"/>
</dbReference>
<dbReference type="SMART" id="SM01025">
    <property type="entry name" value="BEN"/>
    <property type="match status" value="1"/>
</dbReference>
<dbReference type="SMART" id="SM00225">
    <property type="entry name" value="BTB"/>
    <property type="match status" value="1"/>
</dbReference>
<dbReference type="SUPFAM" id="SSF54695">
    <property type="entry name" value="POZ domain"/>
    <property type="match status" value="1"/>
</dbReference>
<dbReference type="PROSITE" id="PS51457">
    <property type="entry name" value="BEN"/>
    <property type="match status" value="1"/>
</dbReference>
<dbReference type="PROSITE" id="PS50097">
    <property type="entry name" value="BTB"/>
    <property type="match status" value="1"/>
</dbReference>
<reference key="1">
    <citation type="journal article" date="1997" name="J. Neurosci.">
        <title>NAC-1, a rat brain mRNA, is increased in the nucleus accumbens three weeks after chronic cocaine self-administration.</title>
        <authorList>
            <person name="Cha X.-Y."/>
            <person name="Pierce R.C."/>
            <person name="Kalivas P.W."/>
            <person name="Mackler S.A."/>
        </authorList>
    </citation>
    <scope>NUCLEOTIDE SEQUENCE [MRNA] (ISOFORM 1)</scope>
    <scope>TISSUE SPECIFICITY</scope>
    <scope>DEVELOPMENTAL STAGE</scope>
    <scope>INDUCTION</scope>
    <source>
        <strain>Sprague-Dawley</strain>
        <tissue>Brain</tissue>
    </source>
</reference>
<reference key="2">
    <citation type="journal article" date="2002" name="Neuroscience">
        <title>Differences in expression, actions and cocaine regulation of two isoforms for the brain transcriptional regulator NAC1.</title>
        <authorList>
            <person name="Korutla L."/>
            <person name="Wang P.J."/>
            <person name="Lewis D.M."/>
            <person name="Neustadter J.H."/>
            <person name="Stromberg M.F."/>
            <person name="Mackler S.A."/>
        </authorList>
    </citation>
    <scope>FUNCTION</scope>
    <scope>SUBCELLULAR LOCATION</scope>
    <scope>DEVELOPMENTAL STAGE</scope>
    <scope>ALTERNATIVE SPLICING</scope>
</reference>
<reference key="3">
    <citation type="journal article" date="2005" name="J. Neurochem.">
        <title>The POZ/BTB protein NAC1 interacts with two different histone deacetylases in neuronal-like cultures.</title>
        <authorList>
            <person name="Korutla L."/>
            <person name="Wang P.J."/>
            <person name="Mackler S.A."/>
        </authorList>
    </citation>
    <scope>FUNCTION</scope>
    <scope>INTERACTION WITH HDAC3 AND HDAC4</scope>
</reference>
<reference key="4">
    <citation type="journal article" date="2005" name="Eur. J. Neurosci.">
        <title>Activity-dependent subcellular localization of NAC1.</title>
        <authorList>
            <person name="Korutla L."/>
            <person name="Champtiaux N."/>
            <person name="Shen H.-W."/>
            <person name="Klugmann M."/>
            <person name="Kalivas P.W."/>
            <person name="Mackler S.A."/>
        </authorList>
    </citation>
    <scope>SUBCELLULAR LOCATION</scope>
    <scope>PHOSPHORYLATION AT SER-245</scope>
</reference>
<reference key="5">
    <citation type="journal article" date="2007" name="J. Neurochem.">
        <title>NAC1, a cocaine-regulated POZ/BTB protein interacts with CoREST.</title>
        <authorList>
            <person name="Korutla L."/>
            <person name="Degnan R."/>
            <person name="Wang P."/>
            <person name="Mackler S.A."/>
        </authorList>
    </citation>
    <scope>FUNCTION</scope>
    <scope>INTERACTION WITH RCOR1</scope>
    <scope>MUTAGENESIS OF GLN-23</scope>
</reference>
<reference key="6">
    <citation type="journal article" date="2007" name="J. Neurosci.">
        <title>NAC1 regulates the recruitment of the proteasome complex into dendritic spines.</title>
        <authorList>
            <person name="Shen H."/>
            <person name="Korutla L."/>
            <person name="Champtiaux N."/>
            <person name="Toda S."/>
            <person name="LaLumiere R."/>
            <person name="Vallone J."/>
            <person name="Klugmann M."/>
            <person name="Blendy J.A."/>
            <person name="Mackler S.A."/>
            <person name="Kalivas P.W."/>
        </authorList>
    </citation>
    <scope>FUNCTION</scope>
    <scope>INTERACTION WITH CUL3 AND PSMD7</scope>
    <scope>SUBCELLULAR LOCATION</scope>
</reference>
<sequence length="514" mass="56450">MAQTLQMEIPNFGNSILECLNEQRLQGLYCDVSVVVKGHAFKAHRAVLAASSSYFRDLFNSSRSAVVELPAAVQPQSFQQILTFCYTGRLSMNMGDQFLLIYTAGFLQIQEIMEKGTEFFLKVSSPSCDSQGLHPEEAPSSEPQSPVAQILGWPACSTPLPLVSRVKTEQELDSVQCTPMAKRLWDSSQKEAGGSGGNNGSRKMAKFSTPDLAPNRMPQPVSVATATAAVAVVAVGGCVSGPSMSERTSPGTSSAYTSDSPSSYHNEEDEEEDAGEEGTDEQYRQICNMYTMYSMLNVGQTVEKVEALPEQVVLESHSRIRVRQDLASLPAELINQIGNRCHPKLYDEGDPSEKLELVTGTNVYITRAQLMNCHVSAGTRHKVLLRRLLASFFDRNTLANSCGTGIRSSTNDPRRKPLDSRVLHAVKYYCQNFAPNFKESEMNAIAADMCTNARRVVRKSWLPKTKPLHLVEGDNYSSFISDTGKIEPDMMSMEHSFETASHDGEAGPSAEVLQ</sequence>
<organism>
    <name type="scientific">Rattus norvegicus</name>
    <name type="common">Rat</name>
    <dbReference type="NCBI Taxonomy" id="10116"/>
    <lineage>
        <taxon>Eukaryota</taxon>
        <taxon>Metazoa</taxon>
        <taxon>Chordata</taxon>
        <taxon>Craniata</taxon>
        <taxon>Vertebrata</taxon>
        <taxon>Euteleostomi</taxon>
        <taxon>Mammalia</taxon>
        <taxon>Eutheria</taxon>
        <taxon>Euarchontoglires</taxon>
        <taxon>Glires</taxon>
        <taxon>Rodentia</taxon>
        <taxon>Myomorpha</taxon>
        <taxon>Muroidea</taxon>
        <taxon>Muridae</taxon>
        <taxon>Murinae</taxon>
        <taxon>Rattus</taxon>
    </lineage>
</organism>
<keyword id="KW-0025">Alternative splicing</keyword>
<keyword id="KW-0963">Cytoplasm</keyword>
<keyword id="KW-1017">Isopeptide bond</keyword>
<keyword id="KW-0539">Nucleus</keyword>
<keyword id="KW-0597">Phosphoprotein</keyword>
<keyword id="KW-1185">Reference proteome</keyword>
<keyword id="KW-0678">Repressor</keyword>
<keyword id="KW-0804">Transcription</keyword>
<keyword id="KW-0805">Transcription regulation</keyword>
<keyword id="KW-0832">Ubl conjugation</keyword>
<comment type="function">
    <text evidence="7 8 10 11">Functions as a transcriptional repressor. Isoform 1 is a stronger transcriptional repressor than isoform 2. Seems to function as a transcriptional corepressor in neuronal cells through recruitment of HDAC3 and HDAC4. Contributes to tumor progression, and tumor cell proliferation and survival. This may be mediated at least in part through repressing transcriptional activity of GADD45GIP1. Required for recruiting the proteasome from the nucleus to the cytoplasm and dendritic spines.</text>
</comment>
<comment type="subunit">
    <text evidence="1 8 10 11">Homooligomer; mediated by the BTB domain (By similarity). Both isoforms interact with HDAC3 and HDAC4. Interacts (via BTB domain) with CUL3, PSMD7 and RCOR1.</text>
</comment>
<comment type="subcellular location">
    <subcellularLocation>
        <location>Nucleus</location>
    </subcellularLocation>
    <subcellularLocation>
        <location>Cytoplasm</location>
    </subcellularLocation>
    <text>Punctate distribution in nucleus. In differentiated PC12 cells diffusely distributed in the cytoplasm and is dependent on phosphorylation.</text>
</comment>
<comment type="alternative products">
    <event type="alternative splicing"/>
    <isoform>
        <id>O35260-1</id>
        <name>1</name>
        <name>lNAC1</name>
        <sequence type="displayed"/>
    </isoform>
    <isoform>
        <id>O35260-2</id>
        <name>2</name>
        <name>sNAC1</name>
        <sequence type="described" ref="VSP_022613"/>
    </isoform>
</comment>
<comment type="tissue specificity">
    <text evidence="12">Highly expressed in the hippocampus, brain cortex, cerebellum and brainstem. Expressed in the nucleus accumbens, olfactory tubercle, the striatum, frontal and parietal cortex and ventral pallidum. Weakly expressed in the heart, liver, kidney, spleen, testis, and skeletal muscle. Isoform 2 is expressed in the brain and liver, less abundantly expressed in the brain than isoform 1.</text>
</comment>
<comment type="developmental stage">
    <text evidence="7 12">Expressed in the brain at 16 dpc, 18 dpc, P2, P8 and P90.</text>
</comment>
<comment type="induction">
    <text evidence="12">Expression is increased by cocaine, selectively in the nucleus accumbens. mRNA is present at increased levels in the nucleus accumbens 3 weeks after withdrawal from cocaine self-administration.</text>
</comment>
<comment type="PTM">
    <text evidence="9">Phosphorylated by protein kinase C (PKC).</text>
</comment>
<proteinExistence type="evidence at protein level"/>